<dbReference type="EC" id="6.4.1.2" evidence="13"/>
<dbReference type="EMBL" id="AY451393">
    <property type="protein sequence ID" value="AAS13685.1"/>
    <property type="molecule type" value="mRNA"/>
</dbReference>
<dbReference type="EMBL" id="AL596252">
    <property type="status" value="NOT_ANNOTATED_CDS"/>
    <property type="molecule type" value="Genomic_DNA"/>
</dbReference>
<dbReference type="EMBL" id="AL596447">
    <property type="status" value="NOT_ANNOTATED_CDS"/>
    <property type="molecule type" value="Genomic_DNA"/>
</dbReference>
<dbReference type="EMBL" id="AJ619664">
    <property type="protein sequence ID" value="CAF02251.1"/>
    <property type="molecule type" value="mRNA"/>
</dbReference>
<dbReference type="EMBL" id="AJ619665">
    <property type="protein sequence ID" value="CAF02252.1"/>
    <property type="molecule type" value="Genomic_DNA"/>
</dbReference>
<dbReference type="EMBL" id="AF374167">
    <property type="protein sequence ID" value="AAK57389.1"/>
    <property type="molecule type" value="mRNA"/>
</dbReference>
<dbReference type="EMBL" id="AF374168">
    <property type="protein sequence ID" value="AAK57390.1"/>
    <property type="molecule type" value="mRNA"/>
</dbReference>
<dbReference type="EMBL" id="AF374169">
    <property type="protein sequence ID" value="AAK57391.1"/>
    <property type="molecule type" value="mRNA"/>
</dbReference>
<dbReference type="EMBL" id="AF374170">
    <property type="protein sequence ID" value="AAK57392.1"/>
    <property type="molecule type" value="mRNA"/>
</dbReference>
<dbReference type="EMBL" id="BC056500">
    <property type="protein sequence ID" value="AAH56500.1"/>
    <property type="molecule type" value="mRNA"/>
</dbReference>
<dbReference type="CCDS" id="CCDS25185.1">
    <molecule id="Q5SWU9-1"/>
</dbReference>
<dbReference type="RefSeq" id="NP_579938.2">
    <molecule id="Q5SWU9-1"/>
    <property type="nucleotide sequence ID" value="NM_133360.3"/>
</dbReference>
<dbReference type="RefSeq" id="XP_006532016.1">
    <molecule id="Q5SWU9-2"/>
    <property type="nucleotide sequence ID" value="XM_006531953.3"/>
</dbReference>
<dbReference type="RefSeq" id="XP_006532017.1">
    <molecule id="Q5SWU9-1"/>
    <property type="nucleotide sequence ID" value="XM_006531954.3"/>
</dbReference>
<dbReference type="RefSeq" id="XP_006532018.1">
    <molecule id="Q5SWU9-1"/>
    <property type="nucleotide sequence ID" value="XM_006531955.3"/>
</dbReference>
<dbReference type="RefSeq" id="XP_006532019.1">
    <molecule id="Q5SWU9-1"/>
    <property type="nucleotide sequence ID" value="XM_006531956.3"/>
</dbReference>
<dbReference type="RefSeq" id="XP_006532020.1">
    <property type="nucleotide sequence ID" value="XM_006531957.3"/>
</dbReference>
<dbReference type="RefSeq" id="XP_011246969.1">
    <molecule id="Q5SWU9-1"/>
    <property type="nucleotide sequence ID" value="XM_011248667.2"/>
</dbReference>
<dbReference type="RefSeq" id="XP_030101322.1">
    <molecule id="Q5SWU9-1"/>
    <property type="nucleotide sequence ID" value="XM_030245462.2"/>
</dbReference>
<dbReference type="RefSeq" id="XP_036012108.1">
    <molecule id="Q5SWU9-1"/>
    <property type="nucleotide sequence ID" value="XM_036156215.1"/>
</dbReference>
<dbReference type="RefSeq" id="XP_036012109.1">
    <molecule id="Q5SWU9-1"/>
    <property type="nucleotide sequence ID" value="XM_036156216.1"/>
</dbReference>
<dbReference type="SMR" id="Q5SWU9"/>
<dbReference type="BioGRID" id="223322">
    <property type="interactions" value="13"/>
</dbReference>
<dbReference type="DIP" id="DIP-32276N"/>
<dbReference type="FunCoup" id="Q5SWU9">
    <property type="interactions" value="2389"/>
</dbReference>
<dbReference type="IntAct" id="Q5SWU9">
    <property type="interactions" value="11"/>
</dbReference>
<dbReference type="MINT" id="Q5SWU9"/>
<dbReference type="STRING" id="10090.ENSMUSP00000099490"/>
<dbReference type="BindingDB" id="Q5SWU9"/>
<dbReference type="ChEMBL" id="CHEMBL3086"/>
<dbReference type="GlyGen" id="Q5SWU9">
    <property type="glycosylation" value="5 sites, 1 O-linked glycan (5 sites)"/>
</dbReference>
<dbReference type="iPTMnet" id="Q5SWU9"/>
<dbReference type="PhosphoSitePlus" id="Q5SWU9"/>
<dbReference type="SwissPalm" id="Q5SWU9"/>
<dbReference type="jPOST" id="Q5SWU9"/>
<dbReference type="PaxDb" id="10090-ENSMUSP00000099490"/>
<dbReference type="PeptideAtlas" id="Q5SWU9"/>
<dbReference type="ProteomicsDB" id="286026">
    <molecule id="Q5SWU9-1"/>
</dbReference>
<dbReference type="ProteomicsDB" id="286027">
    <molecule id="Q5SWU9-2"/>
</dbReference>
<dbReference type="Pumba" id="Q5SWU9"/>
<dbReference type="Antibodypedia" id="73364">
    <property type="antibodies" value="678 antibodies from 39 providers"/>
</dbReference>
<dbReference type="DNASU" id="107476"/>
<dbReference type="Ensembl" id="ENSMUST00000020843.13">
    <molecule id="Q5SWU9-1"/>
    <property type="protein sequence ID" value="ENSMUSP00000020843.7"/>
    <property type="gene ID" value="ENSMUSG00000020532.19"/>
</dbReference>
<dbReference type="Ensembl" id="ENSMUST00000103201.8">
    <molecule id="Q5SWU9-1"/>
    <property type="protein sequence ID" value="ENSMUSP00000099490.2"/>
    <property type="gene ID" value="ENSMUSG00000020532.19"/>
</dbReference>
<dbReference type="GeneID" id="107476"/>
<dbReference type="KEGG" id="mmu:107476"/>
<dbReference type="UCSC" id="uc007kql.1">
    <molecule id="Q5SWU9-1"/>
    <property type="organism name" value="mouse"/>
</dbReference>
<dbReference type="AGR" id="MGI:108451"/>
<dbReference type="CTD" id="31"/>
<dbReference type="MGI" id="MGI:108451">
    <property type="gene designation" value="Acaca"/>
</dbReference>
<dbReference type="VEuPathDB" id="HostDB:ENSMUSG00000020532"/>
<dbReference type="eggNOG" id="KOG0368">
    <property type="taxonomic scope" value="Eukaryota"/>
</dbReference>
<dbReference type="GeneTree" id="ENSGT00940000156706"/>
<dbReference type="HOGENOM" id="CLU_000395_5_0_1"/>
<dbReference type="InParanoid" id="Q5SWU9"/>
<dbReference type="OMA" id="PTPKGHC"/>
<dbReference type="OrthoDB" id="14612at2759"/>
<dbReference type="PhylomeDB" id="Q5SWU9"/>
<dbReference type="TreeFam" id="TF300061"/>
<dbReference type="BRENDA" id="6.4.1.2">
    <property type="organism ID" value="3474"/>
</dbReference>
<dbReference type="Reactome" id="R-MMU-196780">
    <property type="pathway name" value="Biotin transport and metabolism"/>
</dbReference>
<dbReference type="Reactome" id="R-MMU-200425">
    <property type="pathway name" value="Carnitine shuttle"/>
</dbReference>
<dbReference type="Reactome" id="R-MMU-75105">
    <property type="pathway name" value="Fatty acyl-CoA biosynthesis"/>
</dbReference>
<dbReference type="UniPathway" id="UPA00655">
    <property type="reaction ID" value="UER00711"/>
</dbReference>
<dbReference type="BioGRID-ORCS" id="107476">
    <property type="hits" value="19 hits in 82 CRISPR screens"/>
</dbReference>
<dbReference type="ChiTaRS" id="Acaca">
    <property type="organism name" value="mouse"/>
</dbReference>
<dbReference type="PRO" id="PR:Q5SWU9"/>
<dbReference type="Proteomes" id="UP000000589">
    <property type="component" value="Chromosome 11"/>
</dbReference>
<dbReference type="RNAct" id="Q5SWU9">
    <property type="molecule type" value="protein"/>
</dbReference>
<dbReference type="Bgee" id="ENSMUSG00000020532">
    <property type="expression patterns" value="Expressed in epididymal fat pad and 255 other cell types or tissues"/>
</dbReference>
<dbReference type="ExpressionAtlas" id="Q5SWU9">
    <property type="expression patterns" value="baseline and differential"/>
</dbReference>
<dbReference type="GO" id="GO:0015629">
    <property type="term" value="C:actin cytoskeleton"/>
    <property type="evidence" value="ECO:0007669"/>
    <property type="project" value="Ensembl"/>
</dbReference>
<dbReference type="GO" id="GO:0005829">
    <property type="term" value="C:cytosol"/>
    <property type="evidence" value="ECO:0000314"/>
    <property type="project" value="UniProtKB"/>
</dbReference>
<dbReference type="GO" id="GO:0001650">
    <property type="term" value="C:fibrillar center"/>
    <property type="evidence" value="ECO:0007669"/>
    <property type="project" value="Ensembl"/>
</dbReference>
<dbReference type="GO" id="GO:0005739">
    <property type="term" value="C:mitochondrion"/>
    <property type="evidence" value="ECO:0007005"/>
    <property type="project" value="MGI"/>
</dbReference>
<dbReference type="GO" id="GO:0003989">
    <property type="term" value="F:acetyl-CoA carboxylase activity"/>
    <property type="evidence" value="ECO:0000314"/>
    <property type="project" value="UniProtKB"/>
</dbReference>
<dbReference type="GO" id="GO:0005524">
    <property type="term" value="F:ATP binding"/>
    <property type="evidence" value="ECO:0007669"/>
    <property type="project" value="UniProtKB-KW"/>
</dbReference>
<dbReference type="GO" id="GO:0042802">
    <property type="term" value="F:identical protein binding"/>
    <property type="evidence" value="ECO:0007669"/>
    <property type="project" value="Ensembl"/>
</dbReference>
<dbReference type="GO" id="GO:0046872">
    <property type="term" value="F:metal ion binding"/>
    <property type="evidence" value="ECO:0007669"/>
    <property type="project" value="UniProtKB-KW"/>
</dbReference>
<dbReference type="GO" id="GO:0006084">
    <property type="term" value="P:acetyl-CoA metabolic process"/>
    <property type="evidence" value="ECO:0000314"/>
    <property type="project" value="UniProtKB"/>
</dbReference>
<dbReference type="GO" id="GO:0071380">
    <property type="term" value="P:cellular response to prostaglandin E stimulus"/>
    <property type="evidence" value="ECO:0000314"/>
    <property type="project" value="MGI"/>
</dbReference>
<dbReference type="GO" id="GO:0006633">
    <property type="term" value="P:fatty acid biosynthetic process"/>
    <property type="evidence" value="ECO:0000314"/>
    <property type="project" value="UniProtKB"/>
</dbReference>
<dbReference type="GO" id="GO:0008610">
    <property type="term" value="P:lipid biosynthetic process"/>
    <property type="evidence" value="ECO:0000315"/>
    <property type="project" value="MGI"/>
</dbReference>
<dbReference type="GO" id="GO:0055088">
    <property type="term" value="P:lipid homeostasis"/>
    <property type="evidence" value="ECO:0000315"/>
    <property type="project" value="MGI"/>
</dbReference>
<dbReference type="GO" id="GO:0006629">
    <property type="term" value="P:lipid metabolic process"/>
    <property type="evidence" value="ECO:0000315"/>
    <property type="project" value="MGI"/>
</dbReference>
<dbReference type="GO" id="GO:2001295">
    <property type="term" value="P:malonyl-CoA biosynthetic process"/>
    <property type="evidence" value="ECO:0007669"/>
    <property type="project" value="UniProtKB-UniPathway"/>
</dbReference>
<dbReference type="GO" id="GO:0051289">
    <property type="term" value="P:protein homotetramerization"/>
    <property type="evidence" value="ECO:0000314"/>
    <property type="project" value="UniProtKB"/>
</dbReference>
<dbReference type="GO" id="GO:0001894">
    <property type="term" value="P:tissue homeostasis"/>
    <property type="evidence" value="ECO:0000315"/>
    <property type="project" value="MGI"/>
</dbReference>
<dbReference type="CDD" id="cd06850">
    <property type="entry name" value="biotinyl_domain"/>
    <property type="match status" value="1"/>
</dbReference>
<dbReference type="FunFam" id="2.40.460.10:FF:000001">
    <property type="entry name" value="Acetyl-CoA carboxylase 1"/>
    <property type="match status" value="1"/>
</dbReference>
<dbReference type="FunFam" id="2.40.50.100:FF:000005">
    <property type="entry name" value="Acetyl-CoA carboxylase 1"/>
    <property type="match status" value="1"/>
</dbReference>
<dbReference type="FunFam" id="3.30.470.20:FF:000005">
    <property type="entry name" value="Acetyl-CoA carboxylase 1"/>
    <property type="match status" value="1"/>
</dbReference>
<dbReference type="FunFam" id="3.90.1770.10:FF:000001">
    <property type="entry name" value="acetyl-CoA carboxylase 1"/>
    <property type="match status" value="1"/>
</dbReference>
<dbReference type="FunFam" id="3.30.1490.20:FF:000003">
    <property type="entry name" value="acetyl-CoA carboxylase isoform X1"/>
    <property type="match status" value="1"/>
</dbReference>
<dbReference type="FunFam" id="3.40.50.20:FF:000005">
    <property type="entry name" value="acetyl-CoA carboxylase isoform X2"/>
    <property type="match status" value="1"/>
</dbReference>
<dbReference type="FunFam" id="3.90.226.10:FF:000010">
    <property type="entry name" value="acetyl-CoA carboxylase isoform X2"/>
    <property type="match status" value="1"/>
</dbReference>
<dbReference type="Gene3D" id="2.40.50.100">
    <property type="match status" value="1"/>
</dbReference>
<dbReference type="Gene3D" id="3.40.50.20">
    <property type="match status" value="1"/>
</dbReference>
<dbReference type="Gene3D" id="3.90.226.10">
    <property type="entry name" value="2-enoyl-CoA Hydratase, Chain A, domain 1"/>
    <property type="match status" value="2"/>
</dbReference>
<dbReference type="Gene3D" id="3.30.1490.20">
    <property type="entry name" value="ATP-grasp fold, A domain"/>
    <property type="match status" value="1"/>
</dbReference>
<dbReference type="Gene3D" id="3.30.470.20">
    <property type="entry name" value="ATP-grasp fold, B domain"/>
    <property type="match status" value="1"/>
</dbReference>
<dbReference type="Gene3D" id="2.40.460.10">
    <property type="entry name" value="Biotin dependent carboxylase carboxyltransferase"/>
    <property type="match status" value="1"/>
</dbReference>
<dbReference type="Gene3D" id="3.90.1770.10">
    <property type="entry name" value="PreATP-grasp domain"/>
    <property type="match status" value="1"/>
</dbReference>
<dbReference type="InterPro" id="IPR049076">
    <property type="entry name" value="ACCA"/>
</dbReference>
<dbReference type="InterPro" id="IPR049074">
    <property type="entry name" value="ACCA_BT"/>
</dbReference>
<dbReference type="InterPro" id="IPR034733">
    <property type="entry name" value="AcCoA_carboxyl_beta"/>
</dbReference>
<dbReference type="InterPro" id="IPR013537">
    <property type="entry name" value="AcCoA_COase_cen"/>
</dbReference>
<dbReference type="InterPro" id="IPR011761">
    <property type="entry name" value="ATP-grasp"/>
</dbReference>
<dbReference type="InterPro" id="IPR013815">
    <property type="entry name" value="ATP_grasp_subdomain_1"/>
</dbReference>
<dbReference type="InterPro" id="IPR005481">
    <property type="entry name" value="BC-like_N"/>
</dbReference>
<dbReference type="InterPro" id="IPR001882">
    <property type="entry name" value="Biotin_BS"/>
</dbReference>
<dbReference type="InterPro" id="IPR011764">
    <property type="entry name" value="Biotin_carboxylation_dom"/>
</dbReference>
<dbReference type="InterPro" id="IPR005482">
    <property type="entry name" value="Biotin_COase_C"/>
</dbReference>
<dbReference type="InterPro" id="IPR000089">
    <property type="entry name" value="Biotin_lipoyl"/>
</dbReference>
<dbReference type="InterPro" id="IPR005479">
    <property type="entry name" value="CbamoylP_synth_lsu-like_ATP-bd"/>
</dbReference>
<dbReference type="InterPro" id="IPR029045">
    <property type="entry name" value="ClpP/crotonase-like_dom_sf"/>
</dbReference>
<dbReference type="InterPro" id="IPR011763">
    <property type="entry name" value="COA_CT_C"/>
</dbReference>
<dbReference type="InterPro" id="IPR011762">
    <property type="entry name" value="COA_CT_N"/>
</dbReference>
<dbReference type="InterPro" id="IPR016185">
    <property type="entry name" value="PreATP-grasp_dom_sf"/>
</dbReference>
<dbReference type="InterPro" id="IPR011054">
    <property type="entry name" value="Rudment_hybrid_motif"/>
</dbReference>
<dbReference type="InterPro" id="IPR011053">
    <property type="entry name" value="Single_hybrid_motif"/>
</dbReference>
<dbReference type="PANTHER" id="PTHR45728:SF5">
    <property type="entry name" value="ACETYL-COA CARBOXYLASE 1"/>
    <property type="match status" value="1"/>
</dbReference>
<dbReference type="PANTHER" id="PTHR45728">
    <property type="entry name" value="ACETYL-COA CARBOXYLASE, ISOFORM A"/>
    <property type="match status" value="1"/>
</dbReference>
<dbReference type="Pfam" id="PF08326">
    <property type="entry name" value="ACC_central"/>
    <property type="match status" value="1"/>
</dbReference>
<dbReference type="Pfam" id="PF21385">
    <property type="entry name" value="ACCA_BT"/>
    <property type="match status" value="1"/>
</dbReference>
<dbReference type="Pfam" id="PF02785">
    <property type="entry name" value="Biotin_carb_C"/>
    <property type="match status" value="1"/>
</dbReference>
<dbReference type="Pfam" id="PF00289">
    <property type="entry name" value="Biotin_carb_N"/>
    <property type="match status" value="1"/>
</dbReference>
<dbReference type="Pfam" id="PF00364">
    <property type="entry name" value="Biotin_lipoyl"/>
    <property type="match status" value="1"/>
</dbReference>
<dbReference type="Pfam" id="PF01039">
    <property type="entry name" value="Carboxyl_trans"/>
    <property type="match status" value="1"/>
</dbReference>
<dbReference type="Pfam" id="PF02786">
    <property type="entry name" value="CPSase_L_D2"/>
    <property type="match status" value="1"/>
</dbReference>
<dbReference type="SMART" id="SM00878">
    <property type="entry name" value="Biotin_carb_C"/>
    <property type="match status" value="1"/>
</dbReference>
<dbReference type="SUPFAM" id="SSF52096">
    <property type="entry name" value="ClpP/crotonase"/>
    <property type="match status" value="2"/>
</dbReference>
<dbReference type="SUPFAM" id="SSF56059">
    <property type="entry name" value="Glutathione synthetase ATP-binding domain-like"/>
    <property type="match status" value="1"/>
</dbReference>
<dbReference type="SUPFAM" id="SSF52440">
    <property type="entry name" value="PreATP-grasp domain"/>
    <property type="match status" value="1"/>
</dbReference>
<dbReference type="SUPFAM" id="SSF51246">
    <property type="entry name" value="Rudiment single hybrid motif"/>
    <property type="match status" value="1"/>
</dbReference>
<dbReference type="SUPFAM" id="SSF51230">
    <property type="entry name" value="Single hybrid motif"/>
    <property type="match status" value="1"/>
</dbReference>
<dbReference type="PROSITE" id="PS50975">
    <property type="entry name" value="ATP_GRASP"/>
    <property type="match status" value="1"/>
</dbReference>
<dbReference type="PROSITE" id="PS50979">
    <property type="entry name" value="BC"/>
    <property type="match status" value="1"/>
</dbReference>
<dbReference type="PROSITE" id="PS00188">
    <property type="entry name" value="BIOTIN"/>
    <property type="match status" value="1"/>
</dbReference>
<dbReference type="PROSITE" id="PS50968">
    <property type="entry name" value="BIOTINYL_LIPOYL"/>
    <property type="match status" value="1"/>
</dbReference>
<dbReference type="PROSITE" id="PS50989">
    <property type="entry name" value="COA_CT_CTER"/>
    <property type="match status" value="1"/>
</dbReference>
<dbReference type="PROSITE" id="PS50980">
    <property type="entry name" value="COA_CT_NTER"/>
    <property type="match status" value="1"/>
</dbReference>
<dbReference type="PROSITE" id="PS00866">
    <property type="entry name" value="CPSASE_1"/>
    <property type="match status" value="1"/>
</dbReference>
<dbReference type="PROSITE" id="PS00867">
    <property type="entry name" value="CPSASE_2"/>
    <property type="match status" value="1"/>
</dbReference>
<comment type="function">
    <text evidence="13">Cytosolic enzyme that catalyzes the carboxylation of acetyl-CoA to malonyl-CoA, the first and rate-limiting step of de novo fatty acid biosynthesis (PubMed:20952656). This is a 2 steps reaction starting with the ATP-dependent carboxylation of the biotin carried by the biotin carboxyl carrier (BCC) domain followed by the transfer of the carboxyl group from carboxylated biotin to acetyl-CoA (PubMed:20952656).</text>
</comment>
<comment type="catalytic activity">
    <reaction evidence="13">
        <text>hydrogencarbonate + acetyl-CoA + ATP = malonyl-CoA + ADP + phosphate + H(+)</text>
        <dbReference type="Rhea" id="RHEA:11308"/>
        <dbReference type="ChEBI" id="CHEBI:15378"/>
        <dbReference type="ChEBI" id="CHEBI:17544"/>
        <dbReference type="ChEBI" id="CHEBI:30616"/>
        <dbReference type="ChEBI" id="CHEBI:43474"/>
        <dbReference type="ChEBI" id="CHEBI:57288"/>
        <dbReference type="ChEBI" id="CHEBI:57384"/>
        <dbReference type="ChEBI" id="CHEBI:456216"/>
        <dbReference type="EC" id="6.4.1.2"/>
    </reaction>
    <physiologicalReaction direction="left-to-right" evidence="17">
        <dbReference type="Rhea" id="RHEA:11309"/>
    </physiologicalReaction>
</comment>
<comment type="cofactor">
    <cofactor evidence="5 6">
        <name>Mg(2+)</name>
        <dbReference type="ChEBI" id="CHEBI:18420"/>
    </cofactor>
    <cofactor evidence="5 6">
        <name>Mn(2+)</name>
        <dbReference type="ChEBI" id="CHEBI:29035"/>
    </cofactor>
    <text evidence="5 6">Binds 2 magnesium or manganese ions per subunit.</text>
</comment>
<comment type="cofactor">
    <cofactor evidence="3 7">
        <name>biotin</name>
        <dbReference type="ChEBI" id="CHEBI:57586"/>
    </cofactor>
</comment>
<comment type="activity regulation">
    <text evidence="3 13">Inhibited by phosphorylation (By similarity). Citrate promotes oligomerization of the protein into filaments that correspond to the most active form of the carboxylase (PubMed:20952656).</text>
</comment>
<comment type="pathway">
    <text evidence="13">Lipid metabolism; malonyl-CoA biosynthesis; malonyl-CoA from acetyl-CoA: step 1/1.</text>
</comment>
<comment type="subunit">
    <text evidence="11 12 13">Monomer, homodimer, and homotetramer (PubMed:20952656). Can form filamentous polymers (PubMed:20952656). Interacts in its inactive phosphorylated form with the BRCT domains of BRCA1 which prevents ACACA dephosphorylation and inhibits lipid synthesis (PubMed:12360400). Interacts with MID1IP1; interaction with MID1IP1 promotes oligomerization and increases its activity (PubMed:20457939, PubMed:20952656).</text>
</comment>
<comment type="interaction">
    <interactant intactId="EBI-773043">
        <id>Q5SWU9</id>
    </interactant>
    <interactant intactId="EBI-473024">
        <id>Q9CQ20</id>
        <label>Mid1ip1</label>
    </interactant>
    <organismsDiffer>false</organismsDiffer>
    <experiments>2</experiments>
</comment>
<comment type="subcellular location">
    <subcellularLocation>
        <location evidence="11 13">Cytoplasm</location>
        <location evidence="11 13">Cytosol</location>
    </subcellularLocation>
</comment>
<comment type="alternative products">
    <event type="alternative promoter"/>
    <isoform>
        <id>Q5SWU9-1</id>
        <name>1</name>
        <sequence type="displayed"/>
    </isoform>
    <isoform>
        <id>Q5SWU9-2</id>
        <name>2</name>
        <sequence type="described" ref="VSP_026101"/>
    </isoform>
</comment>
<comment type="induction">
    <text evidence="14">Up-regulated by endocannabinoid anandamide/AEA.</text>
</comment>
<comment type="domain">
    <text evidence="3">Consists of an N-terminal biotin carboxylation/carboxylase (BC) domain that catalyzes the ATP-dependent transient carboxylation of the biotin covalently attached to the central biotinyl-binding/biotin carboxyl carrier (BCC) domain. The C-terminal carboxyl transferase (CT) domain catalyzes the transfer of the carboxyl group from carboxylated biotin to acetyl-CoA to produce malonyl-CoA.</text>
</comment>
<comment type="PTM">
    <text evidence="3">Phosphorylation on Ser-1262 is required for interaction with BRCA1.</text>
</comment>
<comment type="PTM">
    <text evidence="1">Phosphorylation at Ser-79 by AMPK inactivates enzyme activity.</text>
</comment>
<comment type="PTM">
    <text evidence="3">The biotin cofactor is covalently attached to the central biotinyl-binding domain and is required for the catalytic activity.</text>
</comment>
<feature type="chain" id="PRO_0000258040" description="Acetyl-CoA carboxylase 1">
    <location>
        <begin position="1"/>
        <end position="2345"/>
    </location>
</feature>
<feature type="domain" description="Biotin carboxylation" evidence="6">
    <location>
        <begin position="116"/>
        <end position="617"/>
    </location>
</feature>
<feature type="domain" description="ATP-grasp" evidence="5">
    <location>
        <begin position="274"/>
        <end position="465"/>
    </location>
</feature>
<feature type="domain" description="Biotinyl-binding" evidence="7">
    <location>
        <begin position="744"/>
        <end position="818"/>
    </location>
</feature>
<feature type="domain" description="CoA carboxyltransferase N-terminal" evidence="8">
    <location>
        <begin position="1575"/>
        <end position="1913"/>
    </location>
</feature>
<feature type="domain" description="CoA carboxyltransferase C-terminal" evidence="9">
    <location>
        <begin position="1917"/>
        <end position="2233"/>
    </location>
</feature>
<feature type="region of interest" description="Carboxyltransferase" evidence="10">
    <location>
        <begin position="1575"/>
        <end position="2233"/>
    </location>
</feature>
<feature type="active site" evidence="4">
    <location>
        <position position="440"/>
    </location>
</feature>
<feature type="binding site" evidence="5">
    <location>
        <begin position="300"/>
        <end position="357"/>
    </location>
    <ligand>
        <name>ATP</name>
        <dbReference type="ChEBI" id="CHEBI:30616"/>
    </ligand>
</feature>
<feature type="binding site" evidence="5 6">
    <location>
        <position position="423"/>
    </location>
    <ligand>
        <name>Mg(2+)</name>
        <dbReference type="ChEBI" id="CHEBI:18420"/>
        <label>1</label>
    </ligand>
</feature>
<feature type="binding site" evidence="5 6">
    <location>
        <position position="423"/>
    </location>
    <ligand>
        <name>Mn(2+)</name>
        <dbReference type="ChEBI" id="CHEBI:29035"/>
        <label>1</label>
    </ligand>
</feature>
<feature type="binding site" evidence="5 6">
    <location>
        <position position="436"/>
    </location>
    <ligand>
        <name>Mg(2+)</name>
        <dbReference type="ChEBI" id="CHEBI:18420"/>
        <label>1</label>
    </ligand>
</feature>
<feature type="binding site" evidence="5 6">
    <location>
        <position position="436"/>
    </location>
    <ligand>
        <name>Mg(2+)</name>
        <dbReference type="ChEBI" id="CHEBI:18420"/>
        <label>2</label>
    </ligand>
</feature>
<feature type="binding site" evidence="5 6">
    <location>
        <position position="436"/>
    </location>
    <ligand>
        <name>Mn(2+)</name>
        <dbReference type="ChEBI" id="CHEBI:29035"/>
        <label>1</label>
    </ligand>
</feature>
<feature type="binding site" evidence="5 6">
    <location>
        <position position="436"/>
    </location>
    <ligand>
        <name>Mn(2+)</name>
        <dbReference type="ChEBI" id="CHEBI:29035"/>
        <label>2</label>
    </ligand>
</feature>
<feature type="binding site" evidence="5 6">
    <location>
        <position position="438"/>
    </location>
    <ligand>
        <name>Mg(2+)</name>
        <dbReference type="ChEBI" id="CHEBI:18420"/>
        <label>2</label>
    </ligand>
</feature>
<feature type="binding site" evidence="5 6">
    <location>
        <position position="438"/>
    </location>
    <ligand>
        <name>Mn(2+)</name>
        <dbReference type="ChEBI" id="CHEBI:29035"/>
        <label>2</label>
    </ligand>
</feature>
<feature type="binding site" evidence="2">
    <location>
        <position position="1822"/>
    </location>
    <ligand>
        <name>CoA</name>
        <dbReference type="ChEBI" id="CHEBI:57287"/>
    </ligand>
</feature>
<feature type="binding site" evidence="2">
    <location>
        <position position="2126"/>
    </location>
    <ligand>
        <name>CoA</name>
        <dbReference type="ChEBI" id="CHEBI:57287"/>
    </ligand>
</feature>
<feature type="binding site" evidence="2">
    <location>
        <position position="2128"/>
    </location>
    <ligand>
        <name>CoA</name>
        <dbReference type="ChEBI" id="CHEBI:57287"/>
    </ligand>
</feature>
<feature type="modified residue" description="N-acetylmethionine" evidence="3">
    <location>
        <position position="1"/>
    </location>
</feature>
<feature type="modified residue" description="Phosphoserine" evidence="3">
    <location>
        <position position="5"/>
    </location>
</feature>
<feature type="modified residue" description="Phosphoserine" evidence="26">
    <location>
        <position position="23"/>
    </location>
</feature>
<feature type="modified residue" description="Phosphoserine" evidence="23 26">
    <location>
        <position position="25"/>
    </location>
</feature>
<feature type="modified residue" description="Phosphoserine" evidence="23 24 26">
    <location>
        <position position="29"/>
    </location>
</feature>
<feature type="modified residue" description="Phosphoserine" evidence="1">
    <location>
        <position position="34"/>
    </location>
</feature>
<feature type="modified residue" description="Phosphoserine" evidence="26">
    <location>
        <position position="47"/>
    </location>
</feature>
<feature type="modified residue" description="Phosphoserine" evidence="1">
    <location>
        <position position="49"/>
    </location>
</feature>
<feature type="modified residue" description="Phosphoserine" evidence="3">
    <location>
        <position position="52"/>
    </location>
</feature>
<feature type="modified residue" description="Phosphothreonine" evidence="26">
    <location>
        <position position="57"/>
    </location>
</feature>
<feature type="modified residue" description="Phosphoserine" evidence="1">
    <location>
        <position position="77"/>
    </location>
</feature>
<feature type="modified residue" description="Phosphoserine" evidence="13 22 24 25 26">
    <location>
        <position position="79"/>
    </location>
</feature>
<feature type="modified residue" description="Phosphoserine; by AMPK" evidence="17 22 24 25 26">
    <location>
        <position position="79"/>
    </location>
</feature>
<feature type="modified residue" description="Phosphothreonine" evidence="26">
    <location>
        <position position="609"/>
    </location>
</feature>
<feature type="modified residue" description="N6-biotinyllysine" evidence="1 7">
    <location>
        <position position="785"/>
    </location>
</feature>
<feature type="modified residue" description="Phosphoserine" evidence="3">
    <location>
        <position position="834"/>
    </location>
</feature>
<feature type="modified residue" description="Phosphoserine" evidence="1">
    <location>
        <position position="1200"/>
    </location>
</feature>
<feature type="modified residue" description="Phosphoserine" evidence="26">
    <location>
        <position position="1215"/>
    </location>
</feature>
<feature type="modified residue" description="Phosphoserine" evidence="26">
    <location>
        <position position="1217"/>
    </location>
</feature>
<feature type="modified residue" description="Phosphothreonine" evidence="26">
    <location>
        <position position="1226"/>
    </location>
</feature>
<feature type="modified residue" description="Phosphoserine" evidence="26">
    <location>
        <position position="1258"/>
    </location>
</feature>
<feature type="modified residue" description="Phosphoserine" evidence="26">
    <location>
        <position position="1262"/>
    </location>
</feature>
<feature type="modified residue" description="Phosphoserine" evidence="3">
    <location>
        <position position="1272"/>
    </location>
</feature>
<feature type="modified residue" description="N6-acetyllysine" evidence="3">
    <location>
        <position position="1333"/>
    </location>
</feature>
<feature type="modified residue" description="Phosphothreonine" evidence="3">
    <location>
        <position position="2152"/>
    </location>
</feature>
<feature type="splice variant" id="VSP_026101" description="In isoform 2." evidence="15">
    <original>M</original>
    <variation>MMWWSTLMSLLRASSFWRRISAETIRIIRALRAYFERIM</variation>
    <location>
        <position position="1"/>
    </location>
</feature>
<feature type="sequence conflict" description="In Ref. 1; AAS13685." evidence="16" ref="1">
    <original>E</original>
    <variation>G</variation>
    <location>
        <position position="623"/>
    </location>
</feature>
<feature type="sequence conflict" description="In Ref. 1; AAS13685." evidence="16" ref="1">
    <original>S</original>
    <variation>P</variation>
    <location>
        <position position="906"/>
    </location>
</feature>
<feature type="sequence conflict" description="In Ref. 1; AAS13685." evidence="16" ref="1">
    <original>C</original>
    <variation>Y</variation>
    <location>
        <position position="933"/>
    </location>
</feature>
<feature type="sequence conflict" description="In Ref. 1; AAS13685." evidence="16" ref="1">
    <original>L</original>
    <variation>S</variation>
    <location>
        <position position="1456"/>
    </location>
</feature>
<feature type="sequence conflict" description="In Ref. 1; AAS13685." evidence="16" ref="1">
    <original>S</original>
    <variation>G</variation>
    <location>
        <position position="1995"/>
    </location>
</feature>
<feature type="sequence conflict" description="In Ref. 1; AAS13685." evidence="16" ref="1">
    <original>V</original>
    <variation>I</variation>
    <location>
        <position position="2077"/>
    </location>
</feature>
<feature type="sequence conflict" description="In Ref. 1; AAS13685." evidence="16" ref="1">
    <original>E</original>
    <variation>K</variation>
    <location>
        <position position="2169"/>
    </location>
</feature>
<feature type="sequence conflict" description="In Ref. 1; AAS13685." evidence="16" ref="1">
    <original>F</original>
    <variation>S</variation>
    <location>
        <position position="2251"/>
    </location>
</feature>
<feature type="sequence conflict" description="In Ref. 1; AAS13685." evidence="16" ref="1">
    <original>T</original>
    <variation>A</variation>
    <location>
        <position position="2257"/>
    </location>
</feature>
<protein>
    <recommendedName>
        <fullName evidence="16">Acetyl-CoA carboxylase 1</fullName>
        <shortName>ACC1</shortName>
        <ecNumber evidence="13">6.4.1.2</ecNumber>
    </recommendedName>
    <alternativeName>
        <fullName>ACC-alpha</fullName>
    </alternativeName>
    <alternativeName>
        <fullName>Acetyl-CoA carboxylase 265</fullName>
    </alternativeName>
</protein>
<evidence type="ECO:0000250" key="1">
    <source>
        <dbReference type="UniProtKB" id="P11497"/>
    </source>
</evidence>
<evidence type="ECO:0000250" key="2">
    <source>
        <dbReference type="UniProtKB" id="Q00955"/>
    </source>
</evidence>
<evidence type="ECO:0000250" key="3">
    <source>
        <dbReference type="UniProtKB" id="Q13085"/>
    </source>
</evidence>
<evidence type="ECO:0000255" key="4"/>
<evidence type="ECO:0000255" key="5">
    <source>
        <dbReference type="PROSITE-ProRule" id="PRU00409"/>
    </source>
</evidence>
<evidence type="ECO:0000255" key="6">
    <source>
        <dbReference type="PROSITE-ProRule" id="PRU00969"/>
    </source>
</evidence>
<evidence type="ECO:0000255" key="7">
    <source>
        <dbReference type="PROSITE-ProRule" id="PRU01066"/>
    </source>
</evidence>
<evidence type="ECO:0000255" key="8">
    <source>
        <dbReference type="PROSITE-ProRule" id="PRU01136"/>
    </source>
</evidence>
<evidence type="ECO:0000255" key="9">
    <source>
        <dbReference type="PROSITE-ProRule" id="PRU01137"/>
    </source>
</evidence>
<evidence type="ECO:0000255" key="10">
    <source>
        <dbReference type="PROSITE-ProRule" id="PRU01138"/>
    </source>
</evidence>
<evidence type="ECO:0000269" key="11">
    <source>
    </source>
</evidence>
<evidence type="ECO:0000269" key="12">
    <source>
    </source>
</evidence>
<evidence type="ECO:0000269" key="13">
    <source>
    </source>
</evidence>
<evidence type="ECO:0000269" key="14">
    <source>
    </source>
</evidence>
<evidence type="ECO:0000303" key="15">
    <source>
    </source>
</evidence>
<evidence type="ECO:0000305" key="16"/>
<evidence type="ECO:0000305" key="17">
    <source>
    </source>
</evidence>
<evidence type="ECO:0000312" key="18">
    <source>
        <dbReference type="EMBL" id="AAH56500.1"/>
    </source>
</evidence>
<evidence type="ECO:0000312" key="19">
    <source>
        <dbReference type="EMBL" id="AAK57392.1"/>
    </source>
</evidence>
<evidence type="ECO:0000312" key="20">
    <source>
        <dbReference type="EMBL" id="AAS13685.1"/>
    </source>
</evidence>
<evidence type="ECO:0000312" key="21">
    <source>
        <dbReference type="MGI" id="MGI:108451"/>
    </source>
</evidence>
<evidence type="ECO:0007744" key="22">
    <source>
    </source>
</evidence>
<evidence type="ECO:0007744" key="23">
    <source>
    </source>
</evidence>
<evidence type="ECO:0007744" key="24">
    <source>
    </source>
</evidence>
<evidence type="ECO:0007744" key="25">
    <source>
    </source>
</evidence>
<evidence type="ECO:0007744" key="26">
    <source>
    </source>
</evidence>
<proteinExistence type="evidence at protein level"/>
<name>ACACA_MOUSE</name>
<organism>
    <name type="scientific">Mus musculus</name>
    <name type="common">Mouse</name>
    <dbReference type="NCBI Taxonomy" id="10090"/>
    <lineage>
        <taxon>Eukaryota</taxon>
        <taxon>Metazoa</taxon>
        <taxon>Chordata</taxon>
        <taxon>Craniata</taxon>
        <taxon>Vertebrata</taxon>
        <taxon>Euteleostomi</taxon>
        <taxon>Mammalia</taxon>
        <taxon>Eutheria</taxon>
        <taxon>Euarchontoglires</taxon>
        <taxon>Glires</taxon>
        <taxon>Rodentia</taxon>
        <taxon>Myomorpha</taxon>
        <taxon>Muroidea</taxon>
        <taxon>Muridae</taxon>
        <taxon>Murinae</taxon>
        <taxon>Mus</taxon>
        <taxon>Mus</taxon>
    </lineage>
</organism>
<gene>
    <name evidence="21" type="primary">Acaca</name>
    <name evidence="20" type="synonym">Acac</name>
    <name type="synonym">Gm738</name>
</gene>
<reference evidence="20" key="1">
    <citation type="submission" date="2003-10" db="EMBL/GenBank/DDBJ databases">
        <title>Characterization of the mouse acetyl-CoA carboxylase 1 (ACC1) gene and identification of an intronless pseudogene.</title>
        <authorList>
            <person name="Mao J."/>
            <person name="Wakil S.J."/>
        </authorList>
    </citation>
    <scope>NUCLEOTIDE SEQUENCE [MRNA] (ISOFORM 1)</scope>
    <source>
        <strain evidence="20">C57BL/6J</strain>
        <tissue evidence="20">Liver</tissue>
    </source>
</reference>
<reference key="2">
    <citation type="journal article" date="2009" name="PLoS Biol.">
        <title>Lineage-specific biology revealed by a finished genome assembly of the mouse.</title>
        <authorList>
            <person name="Church D.M."/>
            <person name="Goodstadt L."/>
            <person name="Hillier L.W."/>
            <person name="Zody M.C."/>
            <person name="Goldstein S."/>
            <person name="She X."/>
            <person name="Bult C.J."/>
            <person name="Agarwala R."/>
            <person name="Cherry J.L."/>
            <person name="DiCuccio M."/>
            <person name="Hlavina W."/>
            <person name="Kapustin Y."/>
            <person name="Meric P."/>
            <person name="Maglott D."/>
            <person name="Birtle Z."/>
            <person name="Marques A.C."/>
            <person name="Graves T."/>
            <person name="Zhou S."/>
            <person name="Teague B."/>
            <person name="Potamousis K."/>
            <person name="Churas C."/>
            <person name="Place M."/>
            <person name="Herschleb J."/>
            <person name="Runnheim R."/>
            <person name="Forrest D."/>
            <person name="Amos-Landgraf J."/>
            <person name="Schwartz D.C."/>
            <person name="Cheng Z."/>
            <person name="Lindblad-Toh K."/>
            <person name="Eichler E.E."/>
            <person name="Ponting C.P."/>
        </authorList>
    </citation>
    <scope>NUCLEOTIDE SEQUENCE [LARGE SCALE GENOMIC DNA]</scope>
    <source>
        <strain>C57BL/6J</strain>
    </source>
</reference>
<reference key="3">
    <citation type="journal article" date="2005" name="Genomics">
        <title>Asymmetric expression of transcripts derived from the shared promoter between the divergently oriented ACACA and TADA2L genes.</title>
        <authorList>
            <person name="Travers M.T."/>
            <person name="Cambot M."/>
            <person name="Kennedy H.T."/>
            <person name="Lenoir G.M."/>
            <person name="Barber M.C."/>
            <person name="Joulin V."/>
        </authorList>
    </citation>
    <scope>NUCLEOTIDE SEQUENCE [GENOMIC DNA / MRNA] OF 1-119 (ISOFORM 2)</scope>
    <source>
        <strain>SWR/J</strain>
        <tissue>Brain</tissue>
    </source>
</reference>
<reference evidence="16 19" key="4">
    <citation type="journal article" date="2003" name="Biochim. Biophys. Acta">
        <title>Acetyl-CoA carboxylase and SREBP expression during peripheral nervous system myelination.</title>
        <authorList>
            <person name="Salles J."/>
            <person name="Sargueil F."/>
            <person name="Knoll-Gellida A."/>
            <person name="Witters L.A."/>
            <person name="Cassagne C."/>
            <person name="Garbay B."/>
        </authorList>
    </citation>
    <scope>NUCLEOTIDE SEQUENCE [MRNA] OF 1-38; 1221-1348 AND 1681-1891</scope>
    <source>
        <strain evidence="19">C57BL/6J</strain>
    </source>
</reference>
<reference evidence="16 18" key="5">
    <citation type="journal article" date="2004" name="Genome Res.">
        <title>The status, quality, and expansion of the NIH full-length cDNA project: the Mammalian Gene Collection (MGC).</title>
        <authorList>
            <consortium name="The MGC Project Team"/>
        </authorList>
    </citation>
    <scope>NUCLEOTIDE SEQUENCE [LARGE SCALE MRNA] OF 1501-2345</scope>
    <source>
        <strain evidence="18">C57BL/6J</strain>
        <tissue evidence="18">Brain</tissue>
    </source>
</reference>
<reference evidence="16" key="6">
    <citation type="journal article" date="2002" name="Oncogene">
        <title>BRCA1 interacts with acetyl-CoA carboxylase through its tandem of BRCT domains.</title>
        <authorList>
            <person name="Magnard C."/>
            <person name="Bachelier R."/>
            <person name="Vincent A."/>
            <person name="Jaquinod M."/>
            <person name="Kieffer S."/>
            <person name="Lenoir G.M."/>
            <person name="Venezia N.D."/>
        </authorList>
    </citation>
    <scope>PROTEIN SEQUENCE OF 298-306 AND 2267-2275</scope>
    <scope>INTERACTION WITH BRCA1</scope>
    <scope>SUBCELLULAR LOCATION</scope>
</reference>
<reference key="7">
    <citation type="journal article" date="2007" name="Mol. Cell. Proteomics">
        <title>Mitochondrial phosphoproteome revealed by an improved IMAC method and MS/MS/MS.</title>
        <authorList>
            <person name="Lee J."/>
            <person name="Xu Y."/>
            <person name="Chen Y."/>
            <person name="Sprung R."/>
            <person name="Kim S.C."/>
            <person name="Xie S."/>
            <person name="Zhao Y."/>
        </authorList>
    </citation>
    <scope>PHOSPHORYLATION [LARGE SCALE ANALYSIS] AT SER-79</scope>
    <scope>IDENTIFICATION BY MASS SPECTROMETRY [LARGE SCALE ANALYSIS]</scope>
    <source>
        <tissue>Liver</tissue>
    </source>
</reference>
<reference key="8">
    <citation type="journal article" date="2007" name="Proc. Natl. Acad. Sci. U.S.A.">
        <title>Large-scale phosphorylation analysis of mouse liver.</title>
        <authorList>
            <person name="Villen J."/>
            <person name="Beausoleil S.A."/>
            <person name="Gerber S.A."/>
            <person name="Gygi S.P."/>
        </authorList>
    </citation>
    <scope>PHOSPHORYLATION [LARGE SCALE ANALYSIS] AT SER-25 AND SER-29</scope>
    <scope>IDENTIFICATION BY MASS SPECTROMETRY [LARGE SCALE ANALYSIS]</scope>
    <source>
        <tissue>Liver</tissue>
    </source>
</reference>
<reference key="9">
    <citation type="journal article" date="2008" name="J. Proteome Res.">
        <title>Specific phosphopeptide enrichment with immobilized titanium ion affinity chromatography adsorbent for phosphoproteome analysis.</title>
        <authorList>
            <person name="Zhou H."/>
            <person name="Ye M."/>
            <person name="Dong J."/>
            <person name="Han G."/>
            <person name="Jiang X."/>
            <person name="Wu R."/>
            <person name="Zou H."/>
        </authorList>
    </citation>
    <scope>PHOSPHORYLATION [LARGE SCALE ANALYSIS] AT SER-29 AND SER-79</scope>
    <scope>IDENTIFICATION BY MASS SPECTROMETRY [LARGE SCALE ANALYSIS]</scope>
    <source>
        <tissue>Liver</tissue>
    </source>
</reference>
<reference key="10">
    <citation type="journal article" date="2009" name="Mol. Cell. Proteomics">
        <title>Large scale localization of protein phosphorylation by use of electron capture dissociation mass spectrometry.</title>
        <authorList>
            <person name="Sweet S.M."/>
            <person name="Bailey C.M."/>
            <person name="Cunningham D.L."/>
            <person name="Heath J.K."/>
            <person name="Cooper H.J."/>
        </authorList>
    </citation>
    <scope>PHOSPHORYLATION [LARGE SCALE ANALYSIS] AT SER-79</scope>
    <scope>IDENTIFICATION BY MASS SPECTROMETRY [LARGE SCALE ANALYSIS]</scope>
    <source>
        <tissue>Embryonic fibroblast</tissue>
    </source>
</reference>
<reference key="11">
    <citation type="journal article" date="2010" name="Cell">
        <title>A tissue-specific atlas of mouse protein phosphorylation and expression.</title>
        <authorList>
            <person name="Huttlin E.L."/>
            <person name="Jedrychowski M.P."/>
            <person name="Elias J.E."/>
            <person name="Goswami T."/>
            <person name="Rad R."/>
            <person name="Beausoleil S.A."/>
            <person name="Villen J."/>
            <person name="Haas W."/>
            <person name="Sowa M.E."/>
            <person name="Gygi S.P."/>
        </authorList>
    </citation>
    <scope>PHOSPHORYLATION [LARGE SCALE ANALYSIS] AT SER-23; SER-25; SER-29; SER-47; THR-57; SER-79; THR-609; SER-1215; SER-1217; THR-1226; SER-1258 AND SER-1262</scope>
    <scope>IDENTIFICATION BY MASS SPECTROMETRY [LARGE SCALE ANALYSIS]</scope>
    <source>
        <tissue>Brain</tissue>
        <tissue>Brown adipose tissue</tissue>
        <tissue>Heart</tissue>
        <tissue>Kidney</tissue>
        <tissue>Liver</tissue>
        <tissue>Lung</tissue>
        <tissue>Pancreas</tissue>
        <tissue>Spleen</tissue>
        <tissue>Testis</tissue>
    </source>
</reference>
<reference key="12">
    <citation type="journal article" date="2010" name="Proc. Natl. Acad. Sci. U.S.A.">
        <title>Induced polymerization of mammalian acetyl-CoA carboxylase by MIG12 provides a tertiary level of regulation of fatty acid synthesis.</title>
        <authorList>
            <person name="Kim C.W."/>
            <person name="Moon Y.A."/>
            <person name="Park S.W."/>
            <person name="Cheng D."/>
            <person name="Kwon H.J."/>
            <person name="Horton J.D."/>
        </authorList>
    </citation>
    <scope>INTERACTION WITH MID1IP1</scope>
</reference>
<reference key="13">
    <citation type="journal article" date="2010" name="Proc. Natl. Acad. Sci. U.S.A.">
        <title>Crystal structure of Spot 14, a modulator of fatty acid synthesis.</title>
        <authorList>
            <person name="Colbert C.L."/>
            <person name="Kim C.W."/>
            <person name="Moon Y.A."/>
            <person name="Henry L."/>
            <person name="Palnitkar M."/>
            <person name="McKean W.B."/>
            <person name="Fitzgerald K."/>
            <person name="Deisenhofer J."/>
            <person name="Horton J.D."/>
            <person name="Kwon H.J."/>
        </authorList>
    </citation>
    <scope>FUNCTION</scope>
    <scope>CATALYTIC ACTIVITY</scope>
    <scope>ACTIVITY REGULATION</scope>
    <scope>PATHWAY</scope>
    <scope>SUBUNIT</scope>
    <scope>INTERACTION WITH MID1IP1</scope>
    <scope>PHOSPHORYLATION AT SER-79</scope>
    <scope>SUBCELLULAR LOCATION</scope>
</reference>
<reference key="14">
    <citation type="journal article" date="2012" name="Hepatology">
        <title>Antagonism of peripheral hepatic cannabinoid receptor-1 improves liver lipid metabolism in mice: evidence from cultured explants.</title>
        <authorList>
            <person name="Jourdan T."/>
            <person name="Demizieux L."/>
            <person name="Gresti J."/>
            <person name="Djaouti L."/>
            <person name="Gaba L."/>
            <person name="Verges B."/>
            <person name="Degrace P."/>
        </authorList>
    </citation>
    <scope>INDUCTION BY ENDOCANNABINOID ANANDAMIDE</scope>
</reference>
<keyword id="KW-0007">Acetylation</keyword>
<keyword id="KW-0021">Allosteric enzyme</keyword>
<keyword id="KW-0877">Alternative promoter usage</keyword>
<keyword id="KW-0067">ATP-binding</keyword>
<keyword id="KW-0092">Biotin</keyword>
<keyword id="KW-0963">Cytoplasm</keyword>
<keyword id="KW-0903">Direct protein sequencing</keyword>
<keyword id="KW-0275">Fatty acid biosynthesis</keyword>
<keyword id="KW-0276">Fatty acid metabolism</keyword>
<keyword id="KW-0436">Ligase</keyword>
<keyword id="KW-0444">Lipid biosynthesis</keyword>
<keyword id="KW-0443">Lipid metabolism</keyword>
<keyword id="KW-0460">Magnesium</keyword>
<keyword id="KW-0464">Manganese</keyword>
<keyword id="KW-0479">Metal-binding</keyword>
<keyword id="KW-0511">Multifunctional enzyme</keyword>
<keyword id="KW-0547">Nucleotide-binding</keyword>
<keyword id="KW-0597">Phosphoprotein</keyword>
<keyword id="KW-1185">Reference proteome</keyword>
<accession>Q5SWU9</accession>
<accession>A2A6H4</accession>
<accession>Q5SWU6</accession>
<accession>Q5SWU7</accession>
<accession>Q5SWU8</accession>
<accession>Q6JIZ1</accession>
<accession>Q6PHL9</accession>
<accession>Q705X8</accession>
<accession>Q705X9</accession>
<accession>Q91VC8</accession>
<accession>Q925C4</accession>
<accession>Q925C5</accession>
<sequence>MDEPSPLAKTLELNQHSRFIIGSVSEDNSEDEISNLVKLDLEEKEGSLSPASVSSDTLSDLGISGLQDGLAFHMRSSMSGLHLVKQGRDRKKIDSQRDFTVASPAEFVTRFGGNKVIEKVLIANNGIAAVKCMRSIRRWSYEMFRNERAIRFVVMVTPEDLKANAEYIKMADHYVPVPGGPNNNNYANVELILDIAKRIPVQAVWAGWGHASENPKLPELLLKNGIAFMGPPSQAMWALGDKIASSIVAQTAGIPTLPWSGSGLRVDWQENDFSKRILNVPQDLYEKGYVKDVDDGLKAAEEVGYPVMIKASEGGGGKGIRKVNNADDFPNLFRQVQAEVPGSPIFVMRLAKQSRHLEVQILADQYGNAISLFGRDCSVQRRHQKIIEEAPAAIATPAVFEHMEQCAVKLAKMVGYVSAGTVEYLYSQDGSFYFLELNPRLQVEHPCTEMVADVNLPAAQLQIAMGIPLFRIKDIRMMYGVSPWGDAPIDFENSAHVPCPRGHVIAARITSENPDEGFKPSSGTVQELNFRSNKNVWGYFSVAAAGGLHEFADSQFGHCFSWGENREEAISNMVVALKELSIRGDFRTTVEYLIKLLETESFQLNRIDTGWLDRLIAEKVQAERPDTMLGVVCGALHVADVSLRNSISNFLHSLERGQVLPAHTLLNTVDVELIYEGIKYVLKVTRQSPNSYVVIMNGSCVEVDVHRLSDGGLLLSYDGSSYTTYMKEEVDRYRITIGNKTCVFEKENDPSVMRSPSAGKLIQYIVEDGGHVFAGQCYAEIEVMKMVMTLTAVESGCIHYVKRPGAALDPGCVIAKMQLDNPSKVQQAELHTGSLPQIQSTALRGEKLHRVFHYVLDNLVNVMNGYCLPDPFFSSRVKDWVERLMKTLRDPSLPLLELQDIMTSVSGRIPLNVEKSIKKEMAQYASNITSVLCQFPSQQIANILDSHAATLNRKSEREVFFMNTQSIVQLVQRYRSGIRGHMKAVVMDLLRQYLRVETQFQNGHYDKCVFALREENKSDMNTVLNYIFSHAQVTKKNLLVTMLIDQLCGRDPTLTDELLNILTELTQLSKTTNAKVALRARQVLIASHLPSYELRHNQVESIFLSAIDMYGHQFCIENLQKLILSETSIFDVLPNFFYHSNQVVRMAALEVYVRRAYIAYELNSVQHRQLKDNTCVVEFQFMLPTSHPNRGNIPTLNRMSFASNLNHYGMTHVASVSDVLLDNAFTPPCQRMGGMVSFRTFEDFVRIFDEIMGCFCDSPPQSPTFPESGHTSLYDEDKVPRDEPIHILNVAIKTDGDIEDDRLAAMFREFTQQNKATLVEHGIRRLTFLVAQKDFRKQVNCEVDQRFHREFPKFFTFRARDKFEEDRIYRHLEPALAFQLELNRMRNFDLTAIPCANHKMHLYLGAAKVEVGTEVTDYRFFVRAIIRHSDLVTKEASFEYLQNEGERLLLEAMDELEVAFNNTNVRTDCNHIFLNFVPTVIMDPSKIEESVRSMVMRYGSRLWKLRVLQAELKINIRLTTTGKAIPIRLFLTNESGYYLDISLYKEVTDSRTAQIMFQAYGDKQGPLHGMLINTPYVTKDLLQSKRFQAQSLGTTYIYDIPEMFRQSLIKLWESMSTQAFLPSPPLPSDILTYTELVLDDQGQLVHMNRLPGGNEIGMVAWKMSLKSPEYPDGRDIIVIGNDITYRIGSFGPQEDLLFLRASELARAEGIPRIYVAANSGARIGLAEEIRHMFHVAWVDPEDPYKGYKYLYLTPQDYKRVSALNSVHCEHVEDEGESRYKITDIIGKEEGLGAENLRGSGMIAGESSLAYDEVITISLVTCRAIGIGAYLVRLGQRTIQVENSHLILTGAGALNKVLGREVYTSNNQLGGIQIMHNNGVTHSTVCDDFEGVFTVLHWLSYMPKSVHSSVPLLNSKDPIDRIIEFVPTKAPYDPRWMLAGRPHPTQKGQWLSGFFDYGSFSEIMQPWAQTVVVGRARLGGIPVGVVAVETRTVELSIPADPANLDSEAKIIQQAGQVWFPDSAFKTYQAIKDFNREGLPLMVFANWRGFSGGMKDMYDQVLKFGAYIVDGLRECSQPVMVYIPPQAELRGGSWVVIDPTINPRHMEMYADRESRGSVLEPEGTVEIKFRKKDLVKTMRRVDPVYIRLAERLGTPELSPTERKELESKLKEREEFLIPIYHQVAVQFADLHDTPGRMQEKGVINDILDWKTSRTFFYWRLRRLLLEDLVKKKIHNANPELTDGQIQAMLRRWFVEVEGTVKAYVWDNNKDLVEWLEKQLTEEDGVRSVIEENIKYISRDYVLKQIRSLVQANPEVAMDSIVHMTQHISPTQRAEVVRILSTMDSPST</sequence>